<organism>
    <name type="scientific">Haloferax volcanii (strain ATCC 29605 / DSM 3757 / JCM 8879 / NBRC 14742 / NCIMB 2012 / VKM B-1768 / DS2)</name>
    <name type="common">Halobacterium volcanii</name>
    <dbReference type="NCBI Taxonomy" id="309800"/>
    <lineage>
        <taxon>Archaea</taxon>
        <taxon>Methanobacteriati</taxon>
        <taxon>Methanobacteriota</taxon>
        <taxon>Stenosarchaea group</taxon>
        <taxon>Halobacteria</taxon>
        <taxon>Halobacteriales</taxon>
        <taxon>Haloferacaceae</taxon>
        <taxon>Haloferax</taxon>
    </lineage>
</organism>
<keyword id="KW-0119">Carbohydrate metabolism</keyword>
<keyword id="KW-0456">Lyase</keyword>
<keyword id="KW-0460">Magnesium</keyword>
<keyword id="KW-0479">Metal-binding</keyword>
<keyword id="KW-0614">Plasmid</keyword>
<keyword id="KW-1185">Reference proteome</keyword>
<geneLocation type="plasmid">
    <name>pHV3</name>
</geneLocation>
<protein>
    <recommendedName>
        <fullName evidence="4">Probable 2-keto-3-deoxyxylonate dehydratase</fullName>
        <shortName evidence="4">KDXD</shortName>
        <ecNumber evidence="7">4.2.1.141</ecNumber>
    </recommendedName>
</protein>
<accession>D4GP28</accession>
<gene>
    <name evidence="5" type="primary">xacE</name>
    <name type="ordered locus">HVO_B0027</name>
</gene>
<name>KDXD_HALVD</name>
<reference key="1">
    <citation type="journal article" date="2010" name="PLoS ONE">
        <title>The complete genome sequence of Haloferax volcanii DS2, a model archaeon.</title>
        <authorList>
            <person name="Hartman A.L."/>
            <person name="Norais C."/>
            <person name="Badger J.H."/>
            <person name="Delmas S."/>
            <person name="Haldenby S."/>
            <person name="Madupu R."/>
            <person name="Robinson J."/>
            <person name="Khouri H."/>
            <person name="Ren Q."/>
            <person name="Lowe T.M."/>
            <person name="Maupin-Furlow J."/>
            <person name="Pohlschroder M."/>
            <person name="Daniels C."/>
            <person name="Pfeiffer F."/>
            <person name="Allers T."/>
            <person name="Eisen J.A."/>
        </authorList>
    </citation>
    <scope>NUCLEOTIDE SEQUENCE [LARGE SCALE GENOMIC DNA]</scope>
    <source>
        <strain>ATCC 29605 / DSM 3757 / JCM 8879 / NBRC 14742 / NCIMB 2012 / VKM B-1768 / DS2</strain>
    </source>
</reference>
<reference key="2">
    <citation type="journal article" date="2009" name="J. Biol. Chem.">
        <title>D-xylose degradation pathway in the halophilic archaeon Haloferax volcanii.</title>
        <authorList>
            <person name="Johnsen U."/>
            <person name="Dambeck M."/>
            <person name="Zaiss H."/>
            <person name="Fuhrer T."/>
            <person name="Soppa J."/>
            <person name="Sauer U."/>
            <person name="Schonheit P."/>
        </authorList>
    </citation>
    <scope>FUNCTION</scope>
    <scope>INDUCTION</scope>
    <scope>DISRUPTION PHENOTYPE</scope>
    <scope>PATHWAY</scope>
    <source>
        <strain>DS2 / DS70</strain>
    </source>
</reference>
<reference key="3">
    <citation type="journal article" date="2015" name="Environ. Microbiol.">
        <title>XacR - a novel transcriptional regulator of D-xylose and L-arabinose catabolism in the haloarchaeon Haloferax volcanii.</title>
        <authorList>
            <person name="Johnsen U."/>
            <person name="Sutter J.M."/>
            <person name="Schulz A.C."/>
            <person name="Taestensen J.B."/>
            <person name="Schoenheit P."/>
        </authorList>
    </citation>
    <scope>INDUCTION</scope>
</reference>
<dbReference type="EC" id="4.2.1.141" evidence="7"/>
<dbReference type="EMBL" id="CP001953">
    <property type="protein sequence ID" value="ADE01418.1"/>
    <property type="molecule type" value="Genomic_DNA"/>
</dbReference>
<dbReference type="RefSeq" id="WP_004061785.1">
    <property type="nucleotide sequence ID" value="NC_013964.1"/>
</dbReference>
<dbReference type="SMR" id="D4GP28"/>
<dbReference type="PaxDb" id="309800-C498_01620"/>
<dbReference type="EnsemblBacteria" id="ADE01418">
    <property type="protein sequence ID" value="ADE01418"/>
    <property type="gene ID" value="HVO_B0027"/>
</dbReference>
<dbReference type="GeneID" id="8919100"/>
<dbReference type="KEGG" id="hvo:HVO_B0027"/>
<dbReference type="eggNOG" id="arCOG00236">
    <property type="taxonomic scope" value="Archaea"/>
</dbReference>
<dbReference type="HOGENOM" id="CLU_078481_0_0_2"/>
<dbReference type="OrthoDB" id="38993at2157"/>
<dbReference type="BioCyc" id="MetaCyc:MONOMER-16376"/>
<dbReference type="UniPathway" id="UPA00810"/>
<dbReference type="Proteomes" id="UP000008243">
    <property type="component" value="Plasmid pHV3"/>
</dbReference>
<dbReference type="GO" id="GO:0016829">
    <property type="term" value="F:lyase activity"/>
    <property type="evidence" value="ECO:0007669"/>
    <property type="project" value="UniProtKB-KW"/>
</dbReference>
<dbReference type="GO" id="GO:0046872">
    <property type="term" value="F:metal ion binding"/>
    <property type="evidence" value="ECO:0007669"/>
    <property type="project" value="UniProtKB-KW"/>
</dbReference>
<dbReference type="GO" id="GO:0042843">
    <property type="term" value="P:D-xylose catabolic process"/>
    <property type="evidence" value="ECO:0007669"/>
    <property type="project" value="UniProtKB-UniPathway"/>
</dbReference>
<dbReference type="Gene3D" id="3.90.850.10">
    <property type="entry name" value="Fumarylacetoacetase-like, C-terminal domain"/>
    <property type="match status" value="1"/>
</dbReference>
<dbReference type="InterPro" id="IPR051121">
    <property type="entry name" value="FAH"/>
</dbReference>
<dbReference type="InterPro" id="IPR011234">
    <property type="entry name" value="Fumarylacetoacetase-like_C"/>
</dbReference>
<dbReference type="InterPro" id="IPR036663">
    <property type="entry name" value="Fumarylacetoacetase_C_sf"/>
</dbReference>
<dbReference type="PANTHER" id="PTHR42796:SF7">
    <property type="entry name" value="2-DEHYDRO-3-DEOXY-D-ARABINONATE DEHYDRATASE"/>
    <property type="match status" value="1"/>
</dbReference>
<dbReference type="PANTHER" id="PTHR42796">
    <property type="entry name" value="FUMARYLACETOACETATE HYDROLASE DOMAIN-CONTAINING PROTEIN 2A-RELATED"/>
    <property type="match status" value="1"/>
</dbReference>
<dbReference type="Pfam" id="PF01557">
    <property type="entry name" value="FAA_hydrolase"/>
    <property type="match status" value="1"/>
</dbReference>
<dbReference type="SUPFAM" id="SSF56529">
    <property type="entry name" value="FAH"/>
    <property type="match status" value="1"/>
</dbReference>
<feature type="chain" id="PRO_0000428800" description="Probable 2-keto-3-deoxyxylonate dehydratase">
    <location>
        <begin position="1"/>
        <end position="289"/>
    </location>
</feature>
<feature type="binding site" evidence="1">
    <location>
        <position position="144"/>
    </location>
    <ligand>
        <name>Mg(2+)</name>
        <dbReference type="ChEBI" id="CHEBI:18420"/>
    </ligand>
</feature>
<feature type="binding site" evidence="1">
    <location>
        <position position="146"/>
    </location>
    <ligand>
        <name>Mg(2+)</name>
        <dbReference type="ChEBI" id="CHEBI:18420"/>
    </ligand>
</feature>
<feature type="binding site" evidence="1">
    <location>
        <position position="164"/>
    </location>
    <ligand>
        <name>Mg(2+)</name>
        <dbReference type="ChEBI" id="CHEBI:18420"/>
    </ligand>
</feature>
<proteinExistence type="evidence at transcript level"/>
<comment type="function">
    <text evidence="2">Probable 2-keto-3-deoxyxylonate dehydratase involved in the degradation of D-xylose, a major component of hemicelluloses such as xylan. Catalyzes the fourth reaction in the xylose utilization pathway through dehydratation of 2-dehydro-3-deoxy-D-xylonate into alpha-ketoglutarate semialdehyde (2,5-dioxopentanoate).</text>
</comment>
<comment type="catalytic activity">
    <reaction evidence="7">
        <text>2-dehydro-3-deoxy-D-arabinonate = 2,5-dioxopentanoate + H2O</text>
        <dbReference type="Rhea" id="RHEA:35807"/>
        <dbReference type="ChEBI" id="CHEBI:15377"/>
        <dbReference type="ChEBI" id="CHEBI:16699"/>
        <dbReference type="ChEBI" id="CHEBI:58136"/>
        <dbReference type="EC" id="4.2.1.141"/>
    </reaction>
</comment>
<comment type="pathway">
    <text evidence="2">Carbohydrate metabolism; D-xylose degradation.</text>
</comment>
<comment type="induction">
    <text evidence="2 3">Transcriptionally up-regulated by both L-arabinose and D-xylose via the pentose-specific regulator XacR.</text>
</comment>
<comment type="disruption phenotype">
    <text evidence="2">Impairs growth on D-xylose as sole energy and carbon substrate.</text>
</comment>
<comment type="similarity">
    <text evidence="6">Belongs to the FAH family.</text>
</comment>
<sequence>MHYHQLAVSGERRLTASRDSTTYDLTSADADLRTFGDLARVASIARTSVDRLAAELTEDADVVDDAFVDRHATVPVDAEEIWAAGVTYQISEQAREEESSMPDMYFDVYDADRPEVFFKATPSRTVEPGDAIGVRGDSEWDVPEPELGIVLRRGEIVGYTVGNDVSSRSIEGENPLYLPQAKVYDRCCSIGPCVVTPEDVEDPHELEMSMTIERDGEVIYDDATNTSEMVRSCDELVSYFTRHNTVPELAVILTGTSLVPEQPFDLQEGDHVDITIEGIGTLSNSVTTV</sequence>
<evidence type="ECO:0000250" key="1">
    <source>
        <dbReference type="UniProtKB" id="Q97UA0"/>
    </source>
</evidence>
<evidence type="ECO:0000269" key="2">
    <source>
    </source>
</evidence>
<evidence type="ECO:0000269" key="3">
    <source>
    </source>
</evidence>
<evidence type="ECO:0000303" key="4">
    <source>
    </source>
</evidence>
<evidence type="ECO:0000303" key="5">
    <source>
    </source>
</evidence>
<evidence type="ECO:0000305" key="6"/>
<evidence type="ECO:0000305" key="7">
    <source>
    </source>
</evidence>